<keyword id="KW-0204">Cytolysis</keyword>
<keyword id="KW-0354">Hemolysis</keyword>
<keyword id="KW-0430">Lectin</keyword>
<keyword id="KW-0732">Signal</keyword>
<keyword id="KW-0800">Toxin</keyword>
<keyword id="KW-0843">Virulence</keyword>
<evidence type="ECO:0000255" key="1"/>
<evidence type="ECO:0000255" key="2">
    <source>
        <dbReference type="PROSITE-ProRule" id="PRU00174"/>
    </source>
</evidence>
<evidence type="ECO:0000256" key="3">
    <source>
        <dbReference type="SAM" id="MobiDB-lite"/>
    </source>
</evidence>
<evidence type="ECO:0000305" key="4"/>
<feature type="signal peptide" evidence="1">
    <location>
        <begin position="1"/>
        <end status="unknown"/>
    </location>
</feature>
<feature type="chain" id="PRO_0000013367" description="Hemolysin 4">
    <location>
        <begin status="unknown"/>
        <end position="578"/>
    </location>
</feature>
<feature type="domain" description="Ricin B-type lectin" evidence="2">
    <location>
        <begin position="448"/>
        <end position="539"/>
    </location>
</feature>
<feature type="region of interest" description="Disordered" evidence="3">
    <location>
        <begin position="289"/>
        <end position="322"/>
    </location>
</feature>
<protein>
    <recommendedName>
        <fullName>Hemolysin 4</fullName>
    </recommendedName>
</protein>
<gene>
    <name type="primary">ash4</name>
</gene>
<accession>Q08677</accession>
<proteinExistence type="inferred from homology"/>
<dbReference type="EMBL" id="X65049">
    <property type="protein sequence ID" value="CAA46185.1"/>
    <property type="molecule type" value="Genomic_DNA"/>
</dbReference>
<dbReference type="PIR" id="I39671">
    <property type="entry name" value="S26577"/>
</dbReference>
<dbReference type="SMR" id="Q08677"/>
<dbReference type="STRING" id="1233098.GCA_000315855_01950"/>
<dbReference type="GO" id="GO:0005576">
    <property type="term" value="C:extracellular region"/>
    <property type="evidence" value="ECO:0007669"/>
    <property type="project" value="InterPro"/>
</dbReference>
<dbReference type="GO" id="GO:0030246">
    <property type="term" value="F:carbohydrate binding"/>
    <property type="evidence" value="ECO:0007669"/>
    <property type="project" value="UniProtKB-KW"/>
</dbReference>
<dbReference type="GO" id="GO:0090729">
    <property type="term" value="F:toxin activity"/>
    <property type="evidence" value="ECO:0007669"/>
    <property type="project" value="UniProtKB-KW"/>
</dbReference>
<dbReference type="GO" id="GO:0051715">
    <property type="term" value="P:cytolysis in another organism"/>
    <property type="evidence" value="ECO:0007669"/>
    <property type="project" value="InterPro"/>
</dbReference>
<dbReference type="CDD" id="cd23423">
    <property type="entry name" value="beta-trefoil_Ricin_hemolysin"/>
    <property type="match status" value="1"/>
</dbReference>
<dbReference type="Gene3D" id="3.30.110.130">
    <property type="entry name" value="Hemolytic toxin, N-terminal domain"/>
    <property type="match status" value="1"/>
</dbReference>
<dbReference type="Gene3D" id="2.70.240.20">
    <property type="entry name" value="Leukocidin/Hemolysin toxin, cytolysin domain"/>
    <property type="match status" value="2"/>
</dbReference>
<dbReference type="InterPro" id="IPR022220">
    <property type="entry name" value="Hemolysin_N"/>
</dbReference>
<dbReference type="InterPro" id="IPR043080">
    <property type="entry name" value="Hemolysin_N_sf"/>
</dbReference>
<dbReference type="InterPro" id="IPR016183">
    <property type="entry name" value="Leukocidin/Hemolysin_toxin"/>
</dbReference>
<dbReference type="InterPro" id="IPR035992">
    <property type="entry name" value="Ricin_B-like_lectins"/>
</dbReference>
<dbReference type="InterPro" id="IPR000772">
    <property type="entry name" value="Ricin_B_lectin"/>
</dbReference>
<dbReference type="Pfam" id="PF12563">
    <property type="entry name" value="Hemolysin_N"/>
    <property type="match status" value="1"/>
</dbReference>
<dbReference type="Pfam" id="PF07968">
    <property type="entry name" value="Leukocidin"/>
    <property type="match status" value="2"/>
</dbReference>
<dbReference type="SMART" id="SM00458">
    <property type="entry name" value="RICIN"/>
    <property type="match status" value="1"/>
</dbReference>
<dbReference type="SUPFAM" id="SSF50370">
    <property type="entry name" value="Ricin B-like lectins"/>
    <property type="match status" value="1"/>
</dbReference>
<dbReference type="PROSITE" id="PS50231">
    <property type="entry name" value="RICIN_B_LECTIN"/>
    <property type="match status" value="1"/>
</dbReference>
<comment type="function">
    <text>Bacterial hemolysins are exotoxins that attack blood cell membranes and cause cell rupture by mechanisms not clearly defined.</text>
</comment>
<comment type="similarity">
    <text evidence="4">Belongs to the HlyA hemolysin family.</text>
</comment>
<sequence length="578" mass="63401">MLASLQSEQGLVYLNASSWLDEQQAAKALTRDQLRERVLGQGERIFIDFSGITDKAEPEQARKAMEQLAGISFDADWVLVSAYKGELLFTPLGPPDDPAFYQVMERIDTLAGQGKRHKRSLTQTATAEAGLPRGAFYLKLNRKISVAECTFPRSRTWDRGDRLFCDSPNISLVYRVNLERSLQFGNTGSATPDAKIVRISLDDESAGGGIQLNEDLTWSENIADYLLLDGWARDYATDAIAQDYRFTIDASNTKAAVLKSLPTNLNSKYEHRRISGFEVGVTGGVEVNKDGPKASWRRRPSSASSVTMPTTPRIIGSNARPECPEGEFQLGAGSIRDGGVTALLQDRHRLGNGVRCGSQPHPAAELQGLRAESGCHLQGGADETGSTEFKIDSSVNIRPIYTGIYKHYYVVGGHVSFQGFEDVDKRRRVTASTSFKVDWNHPVFTGGRPVNLQLGGFDNRCLSAGAEHGLSAVTCDETSAAQSFIYDQYGRYVSALDTRRCLDGNNLGQLQSCRLSLGQRWEWKADSDALSNLSAHQLLGHNKQTGELALYDENGNPADVSVRTLTSYTRILRATAGN</sequence>
<name>HLY4_AERSA</name>
<organism>
    <name type="scientific">Aeromonas salmonicida</name>
    <dbReference type="NCBI Taxonomy" id="645"/>
    <lineage>
        <taxon>Bacteria</taxon>
        <taxon>Pseudomonadati</taxon>
        <taxon>Pseudomonadota</taxon>
        <taxon>Gammaproteobacteria</taxon>
        <taxon>Aeromonadales</taxon>
        <taxon>Aeromonadaceae</taxon>
        <taxon>Aeromonas</taxon>
    </lineage>
</organism>
<reference key="1">
    <citation type="journal article" date="1993" name="Microb. Pathog.">
        <title>Cloning and characterization of three hemolysin genes from Aeromonas salmonicida.</title>
        <authorList>
            <person name="Hirono I."/>
            <person name="Aoki T."/>
        </authorList>
    </citation>
    <scope>NUCLEOTIDE SEQUENCE [GENOMIC DNA]</scope>
    <source>
        <strain>17-2</strain>
    </source>
</reference>